<accession>P53678</accession>
<protein>
    <recommendedName>
        <fullName>AP-3 complex subunit mu-2</fullName>
    </recommendedName>
    <alternativeName>
        <fullName>Adaptor-related protein complex 3 subunit mu-2</fullName>
    </alternativeName>
    <alternativeName>
        <fullName>Clathrin assembly protein assembly protein complex 3 mu-2 medium chain</fullName>
    </alternativeName>
    <alternativeName>
        <fullName>Clathrin coat assembly protein AP47 homolog 2</fullName>
    </alternativeName>
    <alternativeName>
        <fullName>Clathrin coat-associated protein AP47 homolog 2</fullName>
    </alternativeName>
    <alternativeName>
        <fullName>Golgi adaptor AP-1 47 kDa protein homolog 2</fullName>
    </alternativeName>
    <alternativeName>
        <fullName>HA1 47 kDa subunit homolog 2</fullName>
    </alternativeName>
    <alternativeName>
        <fullName>Mu3B-adaptin</fullName>
    </alternativeName>
    <alternativeName>
        <fullName>P47B</fullName>
    </alternativeName>
</protein>
<evidence type="ECO:0000250" key="1"/>
<evidence type="ECO:0000255" key="2">
    <source>
        <dbReference type="PROSITE-ProRule" id="PRU00404"/>
    </source>
</evidence>
<evidence type="ECO:0000305" key="3"/>
<reference key="1">
    <citation type="journal article" date="1994" name="Gene">
        <title>Two rat homologs of clathrin-associated adaptor proteins.</title>
        <authorList>
            <person name="Pevsner J."/>
            <person name="Volknandt W."/>
            <person name="Wong B.R."/>
            <person name="Scheller R.H."/>
        </authorList>
    </citation>
    <scope>NUCLEOTIDE SEQUENCE [MRNA]</scope>
    <source>
        <tissue>Brain cortex</tissue>
    </source>
</reference>
<reference key="2">
    <citation type="journal article" date="2004" name="Genome Res.">
        <title>The status, quality, and expansion of the NIH full-length cDNA project: the Mammalian Gene Collection (MGC).</title>
        <authorList>
            <consortium name="The MGC Project Team"/>
        </authorList>
    </citation>
    <scope>NUCLEOTIDE SEQUENCE [LARGE SCALE MRNA]</scope>
    <source>
        <tissue>Testis</tissue>
    </source>
</reference>
<comment type="function">
    <text evidence="1">Component of the adaptor complexes which link clathrin to receptors in coated vesicles. Clathrin-associated protein complexes are believed to interact with the cytoplasmic tails of membrane proteins, leading to their selection and concentration. Ap47 is a subunit of the plasma membrane adaptor. In concert with the BLOC-1 complex, AP-3 is required to target cargos into vesicles assembled at cell bodies for delivery into neurites and nerve terminals (By similarity).</text>
</comment>
<comment type="subunit">
    <text evidence="1">Adaptor protein complex 3 (AP-3) is a heterotetramer composed of two large adaptins (delta-type subunit AP3D1 and beta-type subunit AP3B1 or AP3B2), a medium adaptin (mu-type subunit AP3M1 or AP3M2) and a small adaptin (sigma-type subunit APS1 or AP3S2). AP-3 associates with the BLOC-1 complex (By similarity).</text>
</comment>
<comment type="subcellular location">
    <subcellularLocation>
        <location>Golgi apparatus</location>
    </subcellularLocation>
    <subcellularLocation>
        <location>Cytoplasmic vesicle membrane</location>
        <topology>Peripheral membrane protein</topology>
        <orientation>Cytoplasmic side</orientation>
    </subcellularLocation>
    <text>Component of the coat surrounding the cytoplasmic face of coated vesicles located at the Golgi complex.</text>
</comment>
<comment type="similarity">
    <text evidence="3">Belongs to the adaptor complexes medium subunit family.</text>
</comment>
<keyword id="KW-0968">Cytoplasmic vesicle</keyword>
<keyword id="KW-0333">Golgi apparatus</keyword>
<keyword id="KW-0472">Membrane</keyword>
<keyword id="KW-0653">Protein transport</keyword>
<keyword id="KW-1185">Reference proteome</keyword>
<keyword id="KW-0813">Transport</keyword>
<name>AP3M2_RAT</name>
<organism>
    <name type="scientific">Rattus norvegicus</name>
    <name type="common">Rat</name>
    <dbReference type="NCBI Taxonomy" id="10116"/>
    <lineage>
        <taxon>Eukaryota</taxon>
        <taxon>Metazoa</taxon>
        <taxon>Chordata</taxon>
        <taxon>Craniata</taxon>
        <taxon>Vertebrata</taxon>
        <taxon>Euteleostomi</taxon>
        <taxon>Mammalia</taxon>
        <taxon>Eutheria</taxon>
        <taxon>Euarchontoglires</taxon>
        <taxon>Glires</taxon>
        <taxon>Rodentia</taxon>
        <taxon>Myomorpha</taxon>
        <taxon>Muroidea</taxon>
        <taxon>Muridae</taxon>
        <taxon>Murinae</taxon>
        <taxon>Rattus</taxon>
    </lineage>
</organism>
<feature type="chain" id="PRO_0000193786" description="AP-3 complex subunit mu-2">
    <location>
        <begin position="1"/>
        <end position="418"/>
    </location>
</feature>
<feature type="domain" description="MHD" evidence="2">
    <location>
        <begin position="176"/>
        <end position="417"/>
    </location>
</feature>
<dbReference type="EMBL" id="L07074">
    <property type="protein sequence ID" value="AAA57232.1"/>
    <property type="molecule type" value="mRNA"/>
</dbReference>
<dbReference type="EMBL" id="BC086993">
    <property type="protein sequence ID" value="AAH86993.1"/>
    <property type="molecule type" value="mRNA"/>
</dbReference>
<dbReference type="PIR" id="I63224">
    <property type="entry name" value="I63224"/>
</dbReference>
<dbReference type="RefSeq" id="NP_579839.1">
    <property type="nucleotide sequence ID" value="NM_133305.2"/>
</dbReference>
<dbReference type="RefSeq" id="XP_038950103.1">
    <property type="nucleotide sequence ID" value="XM_039094175.2"/>
</dbReference>
<dbReference type="RefSeq" id="XP_038950105.1">
    <property type="nucleotide sequence ID" value="XM_039094177.2"/>
</dbReference>
<dbReference type="RefSeq" id="XP_063131117.1">
    <property type="nucleotide sequence ID" value="XM_063275047.1"/>
</dbReference>
<dbReference type="SMR" id="P53678"/>
<dbReference type="BioGRID" id="250827">
    <property type="interactions" value="1"/>
</dbReference>
<dbReference type="FunCoup" id="P53678">
    <property type="interactions" value="3111"/>
</dbReference>
<dbReference type="STRING" id="10116.ENSRNOP00000025675"/>
<dbReference type="PhosphoSitePlus" id="P53678"/>
<dbReference type="jPOST" id="P53678"/>
<dbReference type="Ensembl" id="ENSRNOT00000025675.6">
    <property type="protein sequence ID" value="ENSRNOP00000025675.5"/>
    <property type="gene ID" value="ENSRNOG00000018650.6"/>
</dbReference>
<dbReference type="GeneID" id="140667"/>
<dbReference type="KEGG" id="rno:140667"/>
<dbReference type="UCSC" id="RGD:70969">
    <property type="organism name" value="rat"/>
</dbReference>
<dbReference type="AGR" id="RGD:70969"/>
<dbReference type="CTD" id="10947"/>
<dbReference type="RGD" id="70969">
    <property type="gene designation" value="Ap3m2"/>
</dbReference>
<dbReference type="InParanoid" id="P53678"/>
<dbReference type="OMA" id="LIWNIGK"/>
<dbReference type="OrthoDB" id="870at2759"/>
<dbReference type="PhylomeDB" id="P53678"/>
<dbReference type="TreeFam" id="TF315187"/>
<dbReference type="PRO" id="PR:P53678"/>
<dbReference type="Proteomes" id="UP000002494">
    <property type="component" value="Chromosome 16"/>
</dbReference>
<dbReference type="GO" id="GO:1904115">
    <property type="term" value="C:axon cytoplasm"/>
    <property type="evidence" value="ECO:0007669"/>
    <property type="project" value="GOC"/>
</dbReference>
<dbReference type="GO" id="GO:0030131">
    <property type="term" value="C:clathrin adaptor complex"/>
    <property type="evidence" value="ECO:0007669"/>
    <property type="project" value="InterPro"/>
</dbReference>
<dbReference type="GO" id="GO:0031410">
    <property type="term" value="C:cytoplasmic vesicle"/>
    <property type="evidence" value="ECO:0000318"/>
    <property type="project" value="GO_Central"/>
</dbReference>
<dbReference type="GO" id="GO:0030659">
    <property type="term" value="C:cytoplasmic vesicle membrane"/>
    <property type="evidence" value="ECO:0007669"/>
    <property type="project" value="UniProtKB-SubCell"/>
</dbReference>
<dbReference type="GO" id="GO:0098982">
    <property type="term" value="C:GABA-ergic synapse"/>
    <property type="evidence" value="ECO:0000266"/>
    <property type="project" value="RGD"/>
</dbReference>
<dbReference type="GO" id="GO:0098978">
    <property type="term" value="C:glutamatergic synapse"/>
    <property type="evidence" value="ECO:0000266"/>
    <property type="project" value="RGD"/>
</dbReference>
<dbReference type="GO" id="GO:0005794">
    <property type="term" value="C:Golgi apparatus"/>
    <property type="evidence" value="ECO:0007669"/>
    <property type="project" value="UniProtKB-SubCell"/>
</dbReference>
<dbReference type="GO" id="GO:0008021">
    <property type="term" value="C:synaptic vesicle"/>
    <property type="evidence" value="ECO:0000314"/>
    <property type="project" value="SynGO"/>
</dbReference>
<dbReference type="GO" id="GO:0008089">
    <property type="term" value="P:anterograde axonal transport"/>
    <property type="evidence" value="ECO:0000250"/>
    <property type="project" value="UniProtKB"/>
</dbReference>
<dbReference type="GO" id="GO:0048490">
    <property type="term" value="P:anterograde synaptic vesicle transport"/>
    <property type="evidence" value="ECO:0000250"/>
    <property type="project" value="UniProtKB"/>
</dbReference>
<dbReference type="GO" id="GO:0006897">
    <property type="term" value="P:endocytosis"/>
    <property type="evidence" value="ECO:0000318"/>
    <property type="project" value="GO_Central"/>
</dbReference>
<dbReference type="GO" id="GO:0006886">
    <property type="term" value="P:intracellular protein transport"/>
    <property type="evidence" value="ECO:0007669"/>
    <property type="project" value="InterPro"/>
</dbReference>
<dbReference type="GO" id="GO:0046907">
    <property type="term" value="P:intracellular transport"/>
    <property type="evidence" value="ECO:0000303"/>
    <property type="project" value="RGD"/>
</dbReference>
<dbReference type="GO" id="GO:0007269">
    <property type="term" value="P:neurotransmitter secretion"/>
    <property type="evidence" value="ECO:0000303"/>
    <property type="project" value="RGD"/>
</dbReference>
<dbReference type="GO" id="GO:0048488">
    <property type="term" value="P:synaptic vesicle endocytosis"/>
    <property type="evidence" value="ECO:0000266"/>
    <property type="project" value="RGD"/>
</dbReference>
<dbReference type="CDD" id="cd14837">
    <property type="entry name" value="AP3_Mu_N"/>
    <property type="match status" value="1"/>
</dbReference>
<dbReference type="FunFam" id="3.30.450.60:FF:000012">
    <property type="entry name" value="AP-3 complex subunit mu-1 isoform X1"/>
    <property type="match status" value="1"/>
</dbReference>
<dbReference type="FunFam" id="2.60.40.1170:FF:000006">
    <property type="entry name" value="Putative AP-3 complex subunit mu-2-like"/>
    <property type="match status" value="1"/>
</dbReference>
<dbReference type="Gene3D" id="3.30.450.60">
    <property type="match status" value="1"/>
</dbReference>
<dbReference type="Gene3D" id="2.60.40.1170">
    <property type="entry name" value="Mu homology domain, subdomain B"/>
    <property type="match status" value="2"/>
</dbReference>
<dbReference type="InterPro" id="IPR050431">
    <property type="entry name" value="Adaptor_comp_med_subunit"/>
</dbReference>
<dbReference type="InterPro" id="IPR036168">
    <property type="entry name" value="AP2_Mu_C_sf"/>
</dbReference>
<dbReference type="InterPro" id="IPR022775">
    <property type="entry name" value="AP_mu_sigma_su"/>
</dbReference>
<dbReference type="InterPro" id="IPR001392">
    <property type="entry name" value="Clathrin_mu"/>
</dbReference>
<dbReference type="InterPro" id="IPR018240">
    <property type="entry name" value="Clathrin_mu_CS"/>
</dbReference>
<dbReference type="InterPro" id="IPR011012">
    <property type="entry name" value="Longin-like_dom_sf"/>
</dbReference>
<dbReference type="InterPro" id="IPR028565">
    <property type="entry name" value="MHD"/>
</dbReference>
<dbReference type="PANTHER" id="PTHR10529">
    <property type="entry name" value="AP COMPLEX SUBUNIT MU"/>
    <property type="match status" value="1"/>
</dbReference>
<dbReference type="Pfam" id="PF00928">
    <property type="entry name" value="Adap_comp_sub"/>
    <property type="match status" value="1"/>
</dbReference>
<dbReference type="Pfam" id="PF01217">
    <property type="entry name" value="Clat_adaptor_s"/>
    <property type="match status" value="1"/>
</dbReference>
<dbReference type="PIRSF" id="PIRSF005992">
    <property type="entry name" value="Clathrin_mu"/>
    <property type="match status" value="1"/>
</dbReference>
<dbReference type="PRINTS" id="PR00314">
    <property type="entry name" value="CLATHRINADPT"/>
</dbReference>
<dbReference type="SUPFAM" id="SSF49447">
    <property type="entry name" value="Second domain of Mu2 adaptin subunit (ap50) of ap2 adaptor"/>
    <property type="match status" value="1"/>
</dbReference>
<dbReference type="SUPFAM" id="SSF64356">
    <property type="entry name" value="SNARE-like"/>
    <property type="match status" value="1"/>
</dbReference>
<dbReference type="PROSITE" id="PS00990">
    <property type="entry name" value="CLAT_ADAPTOR_M_1"/>
    <property type="match status" value="1"/>
</dbReference>
<dbReference type="PROSITE" id="PS00991">
    <property type="entry name" value="CLAT_ADAPTOR_M_2"/>
    <property type="match status" value="1"/>
</dbReference>
<dbReference type="PROSITE" id="PS51072">
    <property type="entry name" value="MHD"/>
    <property type="match status" value="1"/>
</dbReference>
<gene>
    <name type="primary">Ap3m2</name>
</gene>
<sequence>MIHSLFLINSAGDIFLEKHWKSVVSRSVCDYFFEAQERATEAENVPPVIPTPHHYLLSVYRHKIFFVAVIQTEVPPLFVIEFLHRVVDTFQDYFGVCSEPVIKDNVVVVYEVLEEMLDNGFPLATESNILKELIKPPTILRTVVNTITGSTNVGDQLPTGQLSVVPWRRTGVKYTNNEAYFDVVEEIDAIIDKSGSTVTAEIQGVIDACVKLTGMPDLTLSFMNPRLLDDVSFHPCVRFKRWESERILSFIPPDGNFRLLSYHVSAQNLVAIPVYVKHSISFRDSGSLGRFEITVGPKQTMGKTIEGVTVTSQMPKGVLNMSLTPSQGTHTFDPVTKMLSWDVGKINPQKLPSLKGTMGLQVGASKPDENPTINLQFKIQQLAISGLKVNRLDMYGEKYKPFKGIKYMTKAGKFQVRT</sequence>
<proteinExistence type="evidence at transcript level"/>